<dbReference type="EC" id="3.5.4.19"/>
<dbReference type="EC" id="3.6.1.31"/>
<dbReference type="EMBL" id="AF067228">
    <property type="protein sequence ID" value="AAC97361.1"/>
    <property type="molecule type" value="Genomic_DNA"/>
</dbReference>
<dbReference type="EMBL" id="AE013218">
    <property type="protein sequence ID" value="AAM67669.1"/>
    <property type="molecule type" value="Genomic_DNA"/>
</dbReference>
<dbReference type="RefSeq" id="WP_011053635.1">
    <property type="nucleotide sequence ID" value="NC_004061.1"/>
</dbReference>
<dbReference type="SMR" id="Q9ZHE0"/>
<dbReference type="STRING" id="198804.BUsg_099"/>
<dbReference type="GeneID" id="93003568"/>
<dbReference type="KEGG" id="bas:BUsg_099"/>
<dbReference type="eggNOG" id="COG0139">
    <property type="taxonomic scope" value="Bacteria"/>
</dbReference>
<dbReference type="eggNOG" id="COG0140">
    <property type="taxonomic scope" value="Bacteria"/>
</dbReference>
<dbReference type="HOGENOM" id="CLU_048577_3_1_6"/>
<dbReference type="UniPathway" id="UPA00031">
    <property type="reaction ID" value="UER00007"/>
</dbReference>
<dbReference type="UniPathway" id="UPA00031">
    <property type="reaction ID" value="UER00008"/>
</dbReference>
<dbReference type="Proteomes" id="UP000000416">
    <property type="component" value="Chromosome"/>
</dbReference>
<dbReference type="GO" id="GO:0005737">
    <property type="term" value="C:cytoplasm"/>
    <property type="evidence" value="ECO:0007669"/>
    <property type="project" value="UniProtKB-SubCell"/>
</dbReference>
<dbReference type="GO" id="GO:0005524">
    <property type="term" value="F:ATP binding"/>
    <property type="evidence" value="ECO:0007669"/>
    <property type="project" value="UniProtKB-KW"/>
</dbReference>
<dbReference type="GO" id="GO:0004635">
    <property type="term" value="F:phosphoribosyl-AMP cyclohydrolase activity"/>
    <property type="evidence" value="ECO:0007669"/>
    <property type="project" value="UniProtKB-UniRule"/>
</dbReference>
<dbReference type="GO" id="GO:0004636">
    <property type="term" value="F:phosphoribosyl-ATP diphosphatase activity"/>
    <property type="evidence" value="ECO:0007669"/>
    <property type="project" value="UniProtKB-UniRule"/>
</dbReference>
<dbReference type="GO" id="GO:0000105">
    <property type="term" value="P:L-histidine biosynthetic process"/>
    <property type="evidence" value="ECO:0007669"/>
    <property type="project" value="UniProtKB-UniRule"/>
</dbReference>
<dbReference type="CDD" id="cd11534">
    <property type="entry name" value="NTP-PPase_HisIE_like"/>
    <property type="match status" value="1"/>
</dbReference>
<dbReference type="FunFam" id="1.10.287.1080:FF:000002">
    <property type="entry name" value="Histidine biosynthesis bifunctional protein HisIE"/>
    <property type="match status" value="1"/>
</dbReference>
<dbReference type="FunFam" id="3.10.20.810:FF:000001">
    <property type="entry name" value="Histidine biosynthesis bifunctional protein HisIE"/>
    <property type="match status" value="1"/>
</dbReference>
<dbReference type="Gene3D" id="1.10.287.1080">
    <property type="entry name" value="MazG-like"/>
    <property type="match status" value="1"/>
</dbReference>
<dbReference type="Gene3D" id="3.10.20.810">
    <property type="entry name" value="Phosphoribosyl-AMP cyclohydrolase"/>
    <property type="match status" value="1"/>
</dbReference>
<dbReference type="HAMAP" id="MF_01020">
    <property type="entry name" value="HisE"/>
    <property type="match status" value="1"/>
</dbReference>
<dbReference type="HAMAP" id="MF_01019">
    <property type="entry name" value="HisIE"/>
    <property type="match status" value="1"/>
</dbReference>
<dbReference type="InterPro" id="IPR023019">
    <property type="entry name" value="His_synth_HisIE"/>
</dbReference>
<dbReference type="InterPro" id="IPR008179">
    <property type="entry name" value="HisE"/>
</dbReference>
<dbReference type="InterPro" id="IPR021130">
    <property type="entry name" value="PRib-ATP_PPHydrolase-like"/>
</dbReference>
<dbReference type="InterPro" id="IPR002496">
    <property type="entry name" value="PRib_AMP_CycHydrolase_dom"/>
</dbReference>
<dbReference type="InterPro" id="IPR038019">
    <property type="entry name" value="PRib_AMP_CycHydrolase_sf"/>
</dbReference>
<dbReference type="NCBIfam" id="TIGR03188">
    <property type="entry name" value="histidine_hisI"/>
    <property type="match status" value="1"/>
</dbReference>
<dbReference type="NCBIfam" id="NF002747">
    <property type="entry name" value="PRK02759.1"/>
    <property type="match status" value="1"/>
</dbReference>
<dbReference type="PANTHER" id="PTHR42945">
    <property type="entry name" value="HISTIDINE BIOSYNTHESIS BIFUNCTIONAL PROTEIN"/>
    <property type="match status" value="1"/>
</dbReference>
<dbReference type="PANTHER" id="PTHR42945:SF9">
    <property type="entry name" value="HISTIDINE BIOSYNTHESIS BIFUNCTIONAL PROTEIN HISIE"/>
    <property type="match status" value="1"/>
</dbReference>
<dbReference type="Pfam" id="PF01502">
    <property type="entry name" value="PRA-CH"/>
    <property type="match status" value="1"/>
</dbReference>
<dbReference type="Pfam" id="PF01503">
    <property type="entry name" value="PRA-PH"/>
    <property type="match status" value="1"/>
</dbReference>
<dbReference type="SUPFAM" id="SSF101386">
    <property type="entry name" value="all-alpha NTP pyrophosphatases"/>
    <property type="match status" value="1"/>
</dbReference>
<dbReference type="SUPFAM" id="SSF141734">
    <property type="entry name" value="HisI-like"/>
    <property type="match status" value="1"/>
</dbReference>
<reference key="1">
    <citation type="journal article" date="1998" name="Curr. Microbiol.">
        <title>Buchnera aphidicola (Aphid endosymbiont) contains genes encoding enzymes of histidine biosynthesis.</title>
        <authorList>
            <person name="Clark M.A."/>
            <person name="Baumann L."/>
            <person name="Baumann P."/>
        </authorList>
    </citation>
    <scope>NUCLEOTIDE SEQUENCE [GENOMIC DNA]</scope>
</reference>
<reference key="2">
    <citation type="journal article" date="2002" name="Science">
        <title>50 million years of genomic stasis in endosymbiotic bacteria.</title>
        <authorList>
            <person name="Tamas I."/>
            <person name="Klasson L."/>
            <person name="Canbaeck B."/>
            <person name="Naeslund A.K."/>
            <person name="Eriksson A.-S."/>
            <person name="Wernegreen J.J."/>
            <person name="Sandstroem J.P."/>
            <person name="Moran N.A."/>
            <person name="Andersson S.G.E."/>
        </authorList>
    </citation>
    <scope>NUCLEOTIDE SEQUENCE [LARGE SCALE GENOMIC DNA]</scope>
    <source>
        <strain>Sg</strain>
    </source>
</reference>
<evidence type="ECO:0000250" key="1"/>
<evidence type="ECO:0000305" key="2"/>
<organism>
    <name type="scientific">Buchnera aphidicola subsp. Schizaphis graminum (strain Sg)</name>
    <dbReference type="NCBI Taxonomy" id="198804"/>
    <lineage>
        <taxon>Bacteria</taxon>
        <taxon>Pseudomonadati</taxon>
        <taxon>Pseudomonadota</taxon>
        <taxon>Gammaproteobacteria</taxon>
        <taxon>Enterobacterales</taxon>
        <taxon>Erwiniaceae</taxon>
        <taxon>Buchnera</taxon>
    </lineage>
</organism>
<accession>Q9ZHE0</accession>
<proteinExistence type="inferred from homology"/>
<sequence length="207" mass="23949">MLSKKENLLKLDWIKTNGLIPAIIQDFASNLVLMHGYMNKEAFLKTQKEGFVTFYSRTKKRLWTKGEESGNLLKVIDIVTDCDYDTILIIVEPLGKTCHLNRKSCFFLKENTLNFLSKLEDLIEDRKNFNTDNSYTARLYKSGTKRIAQKVGEEAIETILAAMKNDGDELINESSDLIYHLIVLLHDQNLNFNLIIENLKKRKTEKL</sequence>
<keyword id="KW-0028">Amino-acid biosynthesis</keyword>
<keyword id="KW-0067">ATP-binding</keyword>
<keyword id="KW-0963">Cytoplasm</keyword>
<keyword id="KW-0368">Histidine biosynthesis</keyword>
<keyword id="KW-0378">Hydrolase</keyword>
<keyword id="KW-0511">Multifunctional enzyme</keyword>
<keyword id="KW-0547">Nucleotide-binding</keyword>
<name>HIS2_BUCAP</name>
<protein>
    <recommendedName>
        <fullName>Histidine biosynthesis bifunctional protein HisIE</fullName>
    </recommendedName>
    <domain>
        <recommendedName>
            <fullName>Phosphoribosyl-AMP cyclohydrolase</fullName>
            <shortName>PRA-CH</shortName>
            <ecNumber>3.5.4.19</ecNumber>
        </recommendedName>
    </domain>
    <domain>
        <recommendedName>
            <fullName>Phosphoribosyl-ATP pyrophosphatase</fullName>
            <shortName>PRA-PH</shortName>
            <ecNumber>3.6.1.31</ecNumber>
        </recommendedName>
    </domain>
</protein>
<feature type="chain" id="PRO_0000136406" description="Histidine biosynthesis bifunctional protein HisIE">
    <location>
        <begin position="1"/>
        <end position="207"/>
    </location>
</feature>
<feature type="region of interest" description="Phosphoribosyl-AMP cyclohydrolase">
    <location>
        <begin position="1"/>
        <end position="115"/>
    </location>
</feature>
<feature type="region of interest" description="Phosphoribosyl-ATP pyrophosphohydrolase">
    <location>
        <begin position="116"/>
        <end position="207"/>
    </location>
</feature>
<feature type="sequence conflict" description="In Ref. 1." evidence="2" ref="1">
    <original>RKTEKL</original>
    <variation>ENRKIINL</variation>
    <location>
        <begin position="202"/>
        <end position="207"/>
    </location>
</feature>
<comment type="catalytic activity">
    <reaction>
        <text>1-(5-phospho-beta-D-ribosyl)-ATP + H2O = 1-(5-phospho-beta-D-ribosyl)-5'-AMP + diphosphate + H(+)</text>
        <dbReference type="Rhea" id="RHEA:22828"/>
        <dbReference type="ChEBI" id="CHEBI:15377"/>
        <dbReference type="ChEBI" id="CHEBI:15378"/>
        <dbReference type="ChEBI" id="CHEBI:33019"/>
        <dbReference type="ChEBI" id="CHEBI:59457"/>
        <dbReference type="ChEBI" id="CHEBI:73183"/>
        <dbReference type="EC" id="3.6.1.31"/>
    </reaction>
</comment>
<comment type="catalytic activity">
    <reaction>
        <text>1-(5-phospho-beta-D-ribosyl)-5'-AMP + H2O = 1-(5-phospho-beta-D-ribosyl)-5-[(5-phospho-beta-D-ribosylamino)methylideneamino]imidazole-4-carboxamide</text>
        <dbReference type="Rhea" id="RHEA:20049"/>
        <dbReference type="ChEBI" id="CHEBI:15377"/>
        <dbReference type="ChEBI" id="CHEBI:58435"/>
        <dbReference type="ChEBI" id="CHEBI:59457"/>
        <dbReference type="EC" id="3.5.4.19"/>
    </reaction>
</comment>
<comment type="pathway">
    <text>Amino-acid biosynthesis; L-histidine biosynthesis; L-histidine from 5-phospho-alpha-D-ribose 1-diphosphate: step 2/9.</text>
</comment>
<comment type="pathway">
    <text>Amino-acid biosynthesis; L-histidine biosynthesis; L-histidine from 5-phospho-alpha-D-ribose 1-diphosphate: step 3/9.</text>
</comment>
<comment type="subcellular location">
    <subcellularLocation>
        <location evidence="1">Cytoplasm</location>
    </subcellularLocation>
</comment>
<comment type="similarity">
    <text evidence="2">In the N-terminal section; belongs to the PRA-CH family.</text>
</comment>
<comment type="similarity">
    <text evidence="2">In the C-terminal section; belongs to the PRA-PH family.</text>
</comment>
<gene>
    <name type="primary">hisI</name>
    <name type="synonym">hisIE</name>
    <name type="ordered locus">BUsg_099</name>
</gene>